<reference key="1">
    <citation type="journal article" date="1998" name="Science">
        <title>Genome sequence of the nematode C. elegans: a platform for investigating biology.</title>
        <authorList>
            <consortium name="The C. elegans sequencing consortium"/>
        </authorList>
    </citation>
    <scope>NUCLEOTIDE SEQUENCE [LARGE SCALE GENOMIC DNA]</scope>
    <source>
        <strain>Bristol N2</strain>
    </source>
</reference>
<reference key="2">
    <citation type="submission" date="2000-08" db="EMBL/GenBank/DDBJ databases">
        <title>The Caenorhabditis elegans transcriptome project, a complementary view of the genome.</title>
        <authorList>
            <person name="Kohara Y."/>
            <person name="Shin-i T."/>
            <person name="Suzuki Y."/>
            <person name="Sugano S."/>
            <person name="Potdevin M."/>
            <person name="Thierry-Mieg Y."/>
            <person name="Thierry-Mieg D."/>
            <person name="Thierry-Mieg J."/>
        </authorList>
    </citation>
    <scope>NUCLEOTIDE SEQUENCE [LARGE SCALE MRNA]</scope>
    <source>
        <strain>Bristol N2</strain>
    </source>
</reference>
<reference key="3">
    <citation type="journal article" date="2004" name="Genes Dev.">
        <title>A conserved protein network controls assembly of the outer kinetochore and its ability to sustain tension.</title>
        <authorList>
            <person name="Cheeseman I.M."/>
            <person name="Niessen S."/>
            <person name="Anderson S."/>
            <person name="Hyndman F."/>
            <person name="Yates J.R. III"/>
            <person name="Oegema K."/>
            <person name="Desai A."/>
        </authorList>
    </citation>
    <scope>IDENTIFICATION AS A KINETOCHORE PROTEIN</scope>
</reference>
<organism>
    <name type="scientific">Caenorhabditis elegans</name>
    <dbReference type="NCBI Taxonomy" id="6239"/>
    <lineage>
        <taxon>Eukaryota</taxon>
        <taxon>Metazoa</taxon>
        <taxon>Ecdysozoa</taxon>
        <taxon>Nematoda</taxon>
        <taxon>Chromadorea</taxon>
        <taxon>Rhabditida</taxon>
        <taxon>Rhabditina</taxon>
        <taxon>Rhabditomorpha</taxon>
        <taxon>Rhabditoidea</taxon>
        <taxon>Rhabditidae</taxon>
        <taxon>Peloderinae</taxon>
        <taxon>Caenorhabditis</taxon>
    </lineage>
</organism>
<proteinExistence type="evidence at transcript level"/>
<accession>O45406</accession>
<dbReference type="EMBL" id="Z81515">
    <property type="protein sequence ID" value="CAB04194.3"/>
    <property type="molecule type" value="Genomic_DNA"/>
</dbReference>
<dbReference type="EMBL" id="AF303250">
    <property type="protein sequence ID" value="AAG50208.1"/>
    <property type="molecule type" value="mRNA"/>
</dbReference>
<dbReference type="PIR" id="A88363">
    <property type="entry name" value="A88363"/>
</dbReference>
<dbReference type="PIR" id="T21434">
    <property type="entry name" value="T21434"/>
</dbReference>
<dbReference type="RefSeq" id="NP_496993.1">
    <property type="nucleotide sequence ID" value="NM_064592.7"/>
</dbReference>
<dbReference type="SMR" id="O45406"/>
<dbReference type="BioGRID" id="40378">
    <property type="interactions" value="4"/>
</dbReference>
<dbReference type="ComplexPortal" id="CPX-806">
    <property type="entry name" value="Ndc80 complex"/>
</dbReference>
<dbReference type="FunCoup" id="O45406">
    <property type="interactions" value="204"/>
</dbReference>
<dbReference type="IntAct" id="O45406">
    <property type="interactions" value="6"/>
</dbReference>
<dbReference type="STRING" id="6239.F26H11.1.2"/>
<dbReference type="PaxDb" id="6239-F26H11.1"/>
<dbReference type="PeptideAtlas" id="O45406"/>
<dbReference type="EnsemblMetazoa" id="F26H11.1.1">
    <property type="protein sequence ID" value="F26H11.1.1"/>
    <property type="gene ID" value="WBGene00009179"/>
</dbReference>
<dbReference type="GeneID" id="175097"/>
<dbReference type="KEGG" id="cel:CELE_F26H11.1"/>
<dbReference type="UCSC" id="F26H11.1">
    <property type="organism name" value="c. elegans"/>
</dbReference>
<dbReference type="AGR" id="WB:WBGene00009179"/>
<dbReference type="CTD" id="175097"/>
<dbReference type="WormBase" id="F26H11.1">
    <property type="protein sequence ID" value="CE26712"/>
    <property type="gene ID" value="WBGene00009179"/>
    <property type="gene designation" value="kbp-3"/>
</dbReference>
<dbReference type="eggNOG" id="ENOG502TJ50">
    <property type="taxonomic scope" value="Eukaryota"/>
</dbReference>
<dbReference type="HOGENOM" id="CLU_156774_0_0_1"/>
<dbReference type="InParanoid" id="O45406"/>
<dbReference type="OMA" id="ENLMEMM"/>
<dbReference type="OrthoDB" id="10601155at2759"/>
<dbReference type="PRO" id="PR:O45406"/>
<dbReference type="Proteomes" id="UP000001940">
    <property type="component" value="Chromosome II"/>
</dbReference>
<dbReference type="Bgee" id="WBGene00009179">
    <property type="expression patterns" value="Expressed in germ line (C elegans) and 4 other cell types or tissues"/>
</dbReference>
<dbReference type="GO" id="GO:0000776">
    <property type="term" value="C:kinetochore"/>
    <property type="evidence" value="ECO:0000314"/>
    <property type="project" value="UniProtKB"/>
</dbReference>
<dbReference type="GO" id="GO:0005874">
    <property type="term" value="C:microtubule"/>
    <property type="evidence" value="ECO:0000314"/>
    <property type="project" value="ComplexPortal"/>
</dbReference>
<dbReference type="GO" id="GO:0031262">
    <property type="term" value="C:Ndc80 complex"/>
    <property type="evidence" value="ECO:0000314"/>
    <property type="project" value="WormBase"/>
</dbReference>
<dbReference type="GO" id="GO:0005634">
    <property type="term" value="C:nucleus"/>
    <property type="evidence" value="ECO:0007669"/>
    <property type="project" value="UniProtKB-SubCell"/>
</dbReference>
<dbReference type="GO" id="GO:0008608">
    <property type="term" value="P:attachment of spindle microtubules to kinetochore"/>
    <property type="evidence" value="ECO:0000314"/>
    <property type="project" value="ComplexPortal"/>
</dbReference>
<dbReference type="GO" id="GO:0051301">
    <property type="term" value="P:cell division"/>
    <property type="evidence" value="ECO:0007669"/>
    <property type="project" value="UniProtKB-KW"/>
</dbReference>
<comment type="subcellular location">
    <subcellularLocation>
        <location>Nucleus</location>
    </subcellularLocation>
    <subcellularLocation>
        <location>Chromosome</location>
        <location>Centromere</location>
        <location>Kinetochore</location>
    </subcellularLocation>
    <subcellularLocation>
        <location>Chromosome</location>
    </subcellularLocation>
    <text>Associated with kinetochores. Localize to kinetochores throughout mitosis. Begin to localize to chromosomes during prophase and persist on chromosomes until the end of mitosis.</text>
</comment>
<sequence>MESLNEYMDKIINRLKAVNEKDELVDEGMRKLQKCQEKIMKTRIDAQKHIDERHEQQSFEQQLLNKNMFETEQLEEKLKRLDDENKIGNEREFNKKLEAISAKWTDDVNLLKTTPNEPNDGNRKKLSNLSNILV</sequence>
<gene>
    <name type="primary">kbp-3</name>
    <name type="ORF">F26H11.1</name>
</gene>
<protein>
    <recommendedName>
        <fullName>Kinetochore-binding protein 3</fullName>
    </recommendedName>
</protein>
<keyword id="KW-0131">Cell cycle</keyword>
<keyword id="KW-0132">Cell division</keyword>
<keyword id="KW-0137">Centromere</keyword>
<keyword id="KW-0158">Chromosome</keyword>
<keyword id="KW-0995">Kinetochore</keyword>
<keyword id="KW-0498">Mitosis</keyword>
<keyword id="KW-0539">Nucleus</keyword>
<keyword id="KW-1185">Reference proteome</keyword>
<name>KBP3_CAEEL</name>
<feature type="chain" id="PRO_0000065317" description="Kinetochore-binding protein 3">
    <location>
        <begin position="1"/>
        <end position="134"/>
    </location>
</feature>